<name>Y2279_SHEPW</name>
<organism>
    <name type="scientific">Shewanella piezotolerans (strain WP3 / JCM 13877)</name>
    <dbReference type="NCBI Taxonomy" id="225849"/>
    <lineage>
        <taxon>Bacteria</taxon>
        <taxon>Pseudomonadati</taxon>
        <taxon>Pseudomonadota</taxon>
        <taxon>Gammaproteobacteria</taxon>
        <taxon>Alteromonadales</taxon>
        <taxon>Shewanellaceae</taxon>
        <taxon>Shewanella</taxon>
    </lineage>
</organism>
<comment type="similarity">
    <text evidence="1">Belongs to the UPF0434 family.</text>
</comment>
<reference key="1">
    <citation type="journal article" date="2008" name="PLoS ONE">
        <title>Environmental adaptation: genomic analysis of the piezotolerant and psychrotolerant deep-sea iron reducing bacterium Shewanella piezotolerans WP3.</title>
        <authorList>
            <person name="Wang F."/>
            <person name="Wang J."/>
            <person name="Jian H."/>
            <person name="Zhang B."/>
            <person name="Li S."/>
            <person name="Wang F."/>
            <person name="Zeng X."/>
            <person name="Gao L."/>
            <person name="Bartlett D.H."/>
            <person name="Yu J."/>
            <person name="Hu S."/>
            <person name="Xiao X."/>
        </authorList>
    </citation>
    <scope>NUCLEOTIDE SEQUENCE [LARGE SCALE GENOMIC DNA]</scope>
    <source>
        <strain>WP3 / JCM 13877</strain>
    </source>
</reference>
<feature type="chain" id="PRO_1000138335" description="UPF0434 protein swp_2279">
    <location>
        <begin position="1"/>
        <end position="57"/>
    </location>
</feature>
<gene>
    <name type="ordered locus">swp_2279</name>
</gene>
<evidence type="ECO:0000255" key="1">
    <source>
        <dbReference type="HAMAP-Rule" id="MF_01187"/>
    </source>
</evidence>
<proteinExistence type="inferred from homology"/>
<dbReference type="EMBL" id="CP000472">
    <property type="protein sequence ID" value="ACJ29025.1"/>
    <property type="molecule type" value="Genomic_DNA"/>
</dbReference>
<dbReference type="SMR" id="B8CNQ6"/>
<dbReference type="STRING" id="225849.swp_2279"/>
<dbReference type="KEGG" id="swp:swp_2279"/>
<dbReference type="eggNOG" id="COG2835">
    <property type="taxonomic scope" value="Bacteria"/>
</dbReference>
<dbReference type="HOGENOM" id="CLU_155659_3_1_6"/>
<dbReference type="OrthoDB" id="9812205at2"/>
<dbReference type="Proteomes" id="UP000000753">
    <property type="component" value="Chromosome"/>
</dbReference>
<dbReference type="GO" id="GO:0005829">
    <property type="term" value="C:cytosol"/>
    <property type="evidence" value="ECO:0007669"/>
    <property type="project" value="TreeGrafter"/>
</dbReference>
<dbReference type="FunFam" id="2.20.25.10:FF:000002">
    <property type="entry name" value="UPF0434 protein YcaR"/>
    <property type="match status" value="1"/>
</dbReference>
<dbReference type="Gene3D" id="2.20.25.10">
    <property type="match status" value="1"/>
</dbReference>
<dbReference type="HAMAP" id="MF_01187">
    <property type="entry name" value="UPF0434"/>
    <property type="match status" value="1"/>
</dbReference>
<dbReference type="InterPro" id="IPR005651">
    <property type="entry name" value="Trm112-like"/>
</dbReference>
<dbReference type="PANTHER" id="PTHR33505:SF4">
    <property type="entry name" value="PROTEIN PREY, MITOCHONDRIAL"/>
    <property type="match status" value="1"/>
</dbReference>
<dbReference type="PANTHER" id="PTHR33505">
    <property type="entry name" value="ZGC:162634"/>
    <property type="match status" value="1"/>
</dbReference>
<dbReference type="Pfam" id="PF03966">
    <property type="entry name" value="Trm112p"/>
    <property type="match status" value="1"/>
</dbReference>
<dbReference type="SUPFAM" id="SSF158997">
    <property type="entry name" value="Trm112p-like"/>
    <property type="match status" value="1"/>
</dbReference>
<protein>
    <recommendedName>
        <fullName evidence="1">UPF0434 protein swp_2279</fullName>
    </recommendedName>
</protein>
<sequence>MAFDKKLLDIVACPVCKGKLEYNKQDNQLICKFDKIAYPINDGIPVLLENKAEPLAE</sequence>
<accession>B8CNQ6</accession>